<comment type="function">
    <text evidence="1">Involved in mRNA degradation. Catalyzes the phosphorolysis of single-stranded polyribonucleotides processively in the 3'- to 5'-direction.</text>
</comment>
<comment type="catalytic activity">
    <reaction evidence="1">
        <text>RNA(n+1) + phosphate = RNA(n) + a ribonucleoside 5'-diphosphate</text>
        <dbReference type="Rhea" id="RHEA:22096"/>
        <dbReference type="Rhea" id="RHEA-COMP:14527"/>
        <dbReference type="Rhea" id="RHEA-COMP:17342"/>
        <dbReference type="ChEBI" id="CHEBI:43474"/>
        <dbReference type="ChEBI" id="CHEBI:57930"/>
        <dbReference type="ChEBI" id="CHEBI:140395"/>
        <dbReference type="EC" id="2.7.7.8"/>
    </reaction>
</comment>
<comment type="cofactor">
    <cofactor evidence="1">
        <name>Mg(2+)</name>
        <dbReference type="ChEBI" id="CHEBI:18420"/>
    </cofactor>
</comment>
<comment type="subunit">
    <text evidence="1">Component of the RNA degradosome, which is a multiprotein complex involved in RNA processing and mRNA degradation.</text>
</comment>
<comment type="subcellular location">
    <subcellularLocation>
        <location evidence="1">Cytoplasm</location>
    </subcellularLocation>
</comment>
<comment type="similarity">
    <text evidence="1">Belongs to the polyribonucleotide nucleotidyltransferase family.</text>
</comment>
<comment type="sequence caution" evidence="2">
    <conflict type="erroneous initiation">
        <sequence resource="EMBL-CDS" id="ABU78771"/>
    </conflict>
</comment>
<organism>
    <name type="scientific">Cronobacter sakazakii (strain ATCC BAA-894)</name>
    <name type="common">Enterobacter sakazakii</name>
    <dbReference type="NCBI Taxonomy" id="290339"/>
    <lineage>
        <taxon>Bacteria</taxon>
        <taxon>Pseudomonadati</taxon>
        <taxon>Pseudomonadota</taxon>
        <taxon>Gammaproteobacteria</taxon>
        <taxon>Enterobacterales</taxon>
        <taxon>Enterobacteriaceae</taxon>
        <taxon>Cronobacter</taxon>
    </lineage>
</organism>
<protein>
    <recommendedName>
        <fullName evidence="1">Polyribonucleotide nucleotidyltransferase</fullName>
        <ecNumber evidence="1">2.7.7.8</ecNumber>
    </recommendedName>
    <alternativeName>
        <fullName evidence="1">Polynucleotide phosphorylase</fullName>
        <shortName evidence="1">PNPase</shortName>
    </alternativeName>
</protein>
<dbReference type="EC" id="2.7.7.8" evidence="1"/>
<dbReference type="EMBL" id="CP000783">
    <property type="protein sequence ID" value="ABU78771.1"/>
    <property type="status" value="ALT_INIT"/>
    <property type="molecule type" value="Genomic_DNA"/>
</dbReference>
<dbReference type="RefSeq" id="WP_015387065.1">
    <property type="nucleotide sequence ID" value="NC_009778.1"/>
</dbReference>
<dbReference type="SMR" id="A7MIN6"/>
<dbReference type="GeneID" id="56732214"/>
<dbReference type="KEGG" id="esa:ESA_03557"/>
<dbReference type="HOGENOM" id="CLU_004217_2_2_6"/>
<dbReference type="Proteomes" id="UP000000260">
    <property type="component" value="Chromosome"/>
</dbReference>
<dbReference type="GO" id="GO:0005829">
    <property type="term" value="C:cytosol"/>
    <property type="evidence" value="ECO:0007669"/>
    <property type="project" value="TreeGrafter"/>
</dbReference>
<dbReference type="GO" id="GO:0000175">
    <property type="term" value="F:3'-5'-RNA exonuclease activity"/>
    <property type="evidence" value="ECO:0007669"/>
    <property type="project" value="TreeGrafter"/>
</dbReference>
<dbReference type="GO" id="GO:0000287">
    <property type="term" value="F:magnesium ion binding"/>
    <property type="evidence" value="ECO:0007669"/>
    <property type="project" value="UniProtKB-UniRule"/>
</dbReference>
<dbReference type="GO" id="GO:0004654">
    <property type="term" value="F:polyribonucleotide nucleotidyltransferase activity"/>
    <property type="evidence" value="ECO:0007669"/>
    <property type="project" value="UniProtKB-UniRule"/>
</dbReference>
<dbReference type="GO" id="GO:0003723">
    <property type="term" value="F:RNA binding"/>
    <property type="evidence" value="ECO:0007669"/>
    <property type="project" value="UniProtKB-UniRule"/>
</dbReference>
<dbReference type="GO" id="GO:0006402">
    <property type="term" value="P:mRNA catabolic process"/>
    <property type="evidence" value="ECO:0007669"/>
    <property type="project" value="UniProtKB-UniRule"/>
</dbReference>
<dbReference type="GO" id="GO:0006396">
    <property type="term" value="P:RNA processing"/>
    <property type="evidence" value="ECO:0007669"/>
    <property type="project" value="InterPro"/>
</dbReference>
<dbReference type="CDD" id="cd02393">
    <property type="entry name" value="KH-I_PNPase"/>
    <property type="match status" value="1"/>
</dbReference>
<dbReference type="CDD" id="cd11363">
    <property type="entry name" value="RNase_PH_PNPase_1"/>
    <property type="match status" value="1"/>
</dbReference>
<dbReference type="CDD" id="cd11364">
    <property type="entry name" value="RNase_PH_PNPase_2"/>
    <property type="match status" value="1"/>
</dbReference>
<dbReference type="CDD" id="cd04472">
    <property type="entry name" value="S1_PNPase"/>
    <property type="match status" value="1"/>
</dbReference>
<dbReference type="FunFam" id="2.40.50.140:FF:000023">
    <property type="entry name" value="Polyribonucleotide nucleotidyltransferase"/>
    <property type="match status" value="1"/>
</dbReference>
<dbReference type="FunFam" id="3.30.1370.10:FF:000001">
    <property type="entry name" value="Polyribonucleotide nucleotidyltransferase"/>
    <property type="match status" value="1"/>
</dbReference>
<dbReference type="FunFam" id="3.30.230.70:FF:000001">
    <property type="entry name" value="Polyribonucleotide nucleotidyltransferase"/>
    <property type="match status" value="1"/>
</dbReference>
<dbReference type="FunFam" id="3.30.230.70:FF:000002">
    <property type="entry name" value="Polyribonucleotide nucleotidyltransferase"/>
    <property type="match status" value="1"/>
</dbReference>
<dbReference type="Gene3D" id="3.30.230.70">
    <property type="entry name" value="GHMP Kinase, N-terminal domain"/>
    <property type="match status" value="2"/>
</dbReference>
<dbReference type="Gene3D" id="3.30.1370.10">
    <property type="entry name" value="K Homology domain, type 1"/>
    <property type="match status" value="1"/>
</dbReference>
<dbReference type="Gene3D" id="2.40.50.140">
    <property type="entry name" value="Nucleic acid-binding proteins"/>
    <property type="match status" value="1"/>
</dbReference>
<dbReference type="HAMAP" id="MF_01595">
    <property type="entry name" value="PNPase"/>
    <property type="match status" value="1"/>
</dbReference>
<dbReference type="InterPro" id="IPR001247">
    <property type="entry name" value="ExoRNase_PH_dom1"/>
</dbReference>
<dbReference type="InterPro" id="IPR015847">
    <property type="entry name" value="ExoRNase_PH_dom2"/>
</dbReference>
<dbReference type="InterPro" id="IPR036345">
    <property type="entry name" value="ExoRNase_PH_dom2_sf"/>
</dbReference>
<dbReference type="InterPro" id="IPR004087">
    <property type="entry name" value="KH_dom"/>
</dbReference>
<dbReference type="InterPro" id="IPR004088">
    <property type="entry name" value="KH_dom_type_1"/>
</dbReference>
<dbReference type="InterPro" id="IPR036612">
    <property type="entry name" value="KH_dom_type_1_sf"/>
</dbReference>
<dbReference type="InterPro" id="IPR012340">
    <property type="entry name" value="NA-bd_OB-fold"/>
</dbReference>
<dbReference type="InterPro" id="IPR012162">
    <property type="entry name" value="PNPase"/>
</dbReference>
<dbReference type="InterPro" id="IPR027408">
    <property type="entry name" value="PNPase/RNase_PH_dom_sf"/>
</dbReference>
<dbReference type="InterPro" id="IPR015848">
    <property type="entry name" value="PNPase_PH_RNA-bd_bac/org-type"/>
</dbReference>
<dbReference type="InterPro" id="IPR036456">
    <property type="entry name" value="PNPase_PH_RNA-bd_sf"/>
</dbReference>
<dbReference type="InterPro" id="IPR020568">
    <property type="entry name" value="Ribosomal_Su5_D2-typ_SF"/>
</dbReference>
<dbReference type="InterPro" id="IPR003029">
    <property type="entry name" value="S1_domain"/>
</dbReference>
<dbReference type="NCBIfam" id="TIGR03591">
    <property type="entry name" value="polynuc_phos"/>
    <property type="match status" value="1"/>
</dbReference>
<dbReference type="NCBIfam" id="NF008805">
    <property type="entry name" value="PRK11824.1"/>
    <property type="match status" value="1"/>
</dbReference>
<dbReference type="PANTHER" id="PTHR11252">
    <property type="entry name" value="POLYRIBONUCLEOTIDE NUCLEOTIDYLTRANSFERASE"/>
    <property type="match status" value="1"/>
</dbReference>
<dbReference type="PANTHER" id="PTHR11252:SF0">
    <property type="entry name" value="POLYRIBONUCLEOTIDE NUCLEOTIDYLTRANSFERASE 1, MITOCHONDRIAL"/>
    <property type="match status" value="1"/>
</dbReference>
<dbReference type="Pfam" id="PF00013">
    <property type="entry name" value="KH_1"/>
    <property type="match status" value="1"/>
</dbReference>
<dbReference type="Pfam" id="PF03726">
    <property type="entry name" value="PNPase"/>
    <property type="match status" value="1"/>
</dbReference>
<dbReference type="Pfam" id="PF01138">
    <property type="entry name" value="RNase_PH"/>
    <property type="match status" value="2"/>
</dbReference>
<dbReference type="Pfam" id="PF03725">
    <property type="entry name" value="RNase_PH_C"/>
    <property type="match status" value="2"/>
</dbReference>
<dbReference type="Pfam" id="PF00575">
    <property type="entry name" value="S1"/>
    <property type="match status" value="1"/>
</dbReference>
<dbReference type="PIRSF" id="PIRSF005499">
    <property type="entry name" value="PNPase"/>
    <property type="match status" value="1"/>
</dbReference>
<dbReference type="SMART" id="SM00322">
    <property type="entry name" value="KH"/>
    <property type="match status" value="1"/>
</dbReference>
<dbReference type="SMART" id="SM00316">
    <property type="entry name" value="S1"/>
    <property type="match status" value="1"/>
</dbReference>
<dbReference type="SUPFAM" id="SSF54791">
    <property type="entry name" value="Eukaryotic type KH-domain (KH-domain type I)"/>
    <property type="match status" value="1"/>
</dbReference>
<dbReference type="SUPFAM" id="SSF50249">
    <property type="entry name" value="Nucleic acid-binding proteins"/>
    <property type="match status" value="1"/>
</dbReference>
<dbReference type="SUPFAM" id="SSF46915">
    <property type="entry name" value="Polynucleotide phosphorylase/guanosine pentaphosphate synthase (PNPase/GPSI), domain 3"/>
    <property type="match status" value="1"/>
</dbReference>
<dbReference type="SUPFAM" id="SSF55666">
    <property type="entry name" value="Ribonuclease PH domain 2-like"/>
    <property type="match status" value="2"/>
</dbReference>
<dbReference type="SUPFAM" id="SSF54211">
    <property type="entry name" value="Ribosomal protein S5 domain 2-like"/>
    <property type="match status" value="2"/>
</dbReference>
<dbReference type="PROSITE" id="PS50084">
    <property type="entry name" value="KH_TYPE_1"/>
    <property type="match status" value="1"/>
</dbReference>
<dbReference type="PROSITE" id="PS50126">
    <property type="entry name" value="S1"/>
    <property type="match status" value="1"/>
</dbReference>
<evidence type="ECO:0000255" key="1">
    <source>
        <dbReference type="HAMAP-Rule" id="MF_01595"/>
    </source>
</evidence>
<evidence type="ECO:0000305" key="2"/>
<gene>
    <name evidence="1" type="primary">pnp</name>
    <name type="ordered locus">ESA_03557</name>
</gene>
<proteinExistence type="inferred from homology"/>
<accession>A7MIN6</accession>
<name>PNP_CROS8</name>
<keyword id="KW-0963">Cytoplasm</keyword>
<keyword id="KW-0460">Magnesium</keyword>
<keyword id="KW-0479">Metal-binding</keyword>
<keyword id="KW-0548">Nucleotidyltransferase</keyword>
<keyword id="KW-1185">Reference proteome</keyword>
<keyword id="KW-0694">RNA-binding</keyword>
<keyword id="KW-0808">Transferase</keyword>
<reference key="1">
    <citation type="journal article" date="2010" name="PLoS ONE">
        <title>Genome sequence of Cronobacter sakazakii BAA-894 and comparative genomic hybridization analysis with other Cronobacter species.</title>
        <authorList>
            <person name="Kucerova E."/>
            <person name="Clifton S.W."/>
            <person name="Xia X.Q."/>
            <person name="Long F."/>
            <person name="Porwollik S."/>
            <person name="Fulton L."/>
            <person name="Fronick C."/>
            <person name="Minx P."/>
            <person name="Kyung K."/>
            <person name="Warren W."/>
            <person name="Fulton R."/>
            <person name="Feng D."/>
            <person name="Wollam A."/>
            <person name="Shah N."/>
            <person name="Bhonagiri V."/>
            <person name="Nash W.E."/>
            <person name="Hallsworth-Pepin K."/>
            <person name="Wilson R.K."/>
            <person name="McClelland M."/>
            <person name="Forsythe S.J."/>
        </authorList>
    </citation>
    <scope>NUCLEOTIDE SEQUENCE [LARGE SCALE GENOMIC DNA]</scope>
    <source>
        <strain>ATCC BAA-894</strain>
    </source>
</reference>
<sequence length="711" mass="76970">MLNPIVRKFQYGQHTVTLETGMMARQATAAVMVSMDDTAVFVTVVGAKKAKPGQDFFPLTINYQERTYAAGRIPGGFFRREGRPSEGETLIARLIDRPLRPLFPEGFVNEVQVIATVVSVNPQVNPDIVAMIGASAALSLSGIPFNGPIGAARVGYINDQYVLNPTQDELKSSKLDLVVAGTESAVLMVESEAELLSEDQMLGAVVFGHEQQQVVIQNINDLVKEAGKPRWDWQPEAANEALNARVKALAESRLSDAYRITDKQERYSQIDAIKADVIAALQAEQAEGDALDENELGDILHAIEKNVVRSRVLAGEPRIDGREKDMIRGLDVRTGVLPRTHGSALFTRGETQALVTATLGTERDAQNIDELMGERTDRFLFHYNFPPYSVGETGMVGSPKRREIGHGRLAKRGVLAVMPAADRFPYTVRVVSEITESNGSSSMASVCGASLALMDAGVPIKAAVAGIAMGLVKEGENFVVLSDILGDEDHLGDMDFKVAGSREGITALQMDIKIEGITKEIMQVALNQAKGARLHILGVMEQAINAPRGDISQFAPRIHTIKISPDKIKDVIGKGGSVIRALTEETGTTIEIEDDGTVKIAATDGEKAKHAIRRIEEITAEIEVGRIYNGKVTRIVDFGAFVAIGGGKEGLVHISQIADKRVEKVTDYLQMGQEVPVKVLEVDRQGRVRLSIKEATEQTQEAAAPAAPEAE</sequence>
<feature type="chain" id="PRO_0000329634" description="Polyribonucleotide nucleotidyltransferase">
    <location>
        <begin position="1"/>
        <end position="711"/>
    </location>
</feature>
<feature type="domain" description="KH" evidence="1">
    <location>
        <begin position="556"/>
        <end position="615"/>
    </location>
</feature>
<feature type="domain" description="S1 motif" evidence="1">
    <location>
        <begin position="625"/>
        <end position="693"/>
    </location>
</feature>
<feature type="binding site" evidence="1">
    <location>
        <position position="489"/>
    </location>
    <ligand>
        <name>Mg(2+)</name>
        <dbReference type="ChEBI" id="CHEBI:18420"/>
    </ligand>
</feature>
<feature type="binding site" evidence="1">
    <location>
        <position position="495"/>
    </location>
    <ligand>
        <name>Mg(2+)</name>
        <dbReference type="ChEBI" id="CHEBI:18420"/>
    </ligand>
</feature>